<sequence length="84" mass="9628">MKVSVLITLAVLGVMFLLTSAEERGSDQMDSPAWLKSMERIFQSEERECRWLFGGCEKDSDCCEHLGCRRAKPSWCGWDFTFGK</sequence>
<dbReference type="EMBL" id="EU233895">
    <property type="protein sequence ID" value="ABY71714.1"/>
    <property type="molecule type" value="mRNA"/>
</dbReference>
<dbReference type="SMR" id="B1P1G4"/>
<dbReference type="ArachnoServer" id="AS000843">
    <property type="toxin name" value="U21-theraphotoxin-Cg1b"/>
</dbReference>
<dbReference type="GO" id="GO:0005576">
    <property type="term" value="C:extracellular region"/>
    <property type="evidence" value="ECO:0007669"/>
    <property type="project" value="UniProtKB-SubCell"/>
</dbReference>
<dbReference type="GO" id="GO:0008200">
    <property type="term" value="F:ion channel inhibitor activity"/>
    <property type="evidence" value="ECO:0007669"/>
    <property type="project" value="InterPro"/>
</dbReference>
<dbReference type="GO" id="GO:0090729">
    <property type="term" value="F:toxin activity"/>
    <property type="evidence" value="ECO:0007669"/>
    <property type="project" value="UniProtKB-KW"/>
</dbReference>
<dbReference type="InterPro" id="IPR011696">
    <property type="entry name" value="Huwentoxin-1"/>
</dbReference>
<dbReference type="Pfam" id="PF07740">
    <property type="entry name" value="Toxin_12"/>
    <property type="match status" value="1"/>
</dbReference>
<dbReference type="SUPFAM" id="SSF57059">
    <property type="entry name" value="omega toxin-like"/>
    <property type="match status" value="1"/>
</dbReference>
<comment type="function">
    <text>Probable ion channel inhibitor.</text>
</comment>
<comment type="subcellular location">
    <subcellularLocation>
        <location>Secreted</location>
    </subcellularLocation>
</comment>
<comment type="tissue specificity">
    <text>Expressed by the venom gland.</text>
</comment>
<comment type="domain">
    <text evidence="1">The presence of a 'disulfide through disulfide knot' structurally defines this protein as a knottin.</text>
</comment>
<comment type="similarity">
    <text evidence="4">Belongs to the neurotoxin 10 (Hwtx-1) family. 05 (F4a) subfamily.</text>
</comment>
<accession>B1P1G4</accession>
<proteinExistence type="evidence at protein level"/>
<protein>
    <recommendedName>
        <fullName>U21-theraphotoxin-Cg1b</fullName>
        <shortName>U21-TRTX-Cg1b</shortName>
    </recommendedName>
    <alternativeName>
        <fullName>Jingzhaotoxin-39</fullName>
        <shortName>JZTX-39</shortName>
    </alternativeName>
    <alternativeName>
        <fullName>Peptide F4-28.01</fullName>
    </alternativeName>
</protein>
<reference key="1">
    <citation type="journal article" date="2008" name="Cell. Mol. Life Sci.">
        <title>Molecular diversity and evolution of cystine knot toxins of the tarantula Chilobrachys jingzhao.</title>
        <authorList>
            <person name="Chen J."/>
            <person name="Deng M."/>
            <person name="He Q."/>
            <person name="Meng E."/>
            <person name="Jiang L."/>
            <person name="Liao Z."/>
            <person name="Rong M."/>
            <person name="Liang S."/>
        </authorList>
    </citation>
    <scope>NUCLEOTIDE SEQUENCE [LARGE SCALE MRNA]</scope>
    <source>
        <tissue>Venom gland</tissue>
    </source>
</reference>
<reference key="2">
    <citation type="journal article" date="2007" name="Proteomics">
        <title>Proteomic and peptidomic analysis of the venom from Chinese tarantula Chilobrachys jingzhao.</title>
        <authorList>
            <person name="Liao Z."/>
            <person name="Cao J."/>
            <person name="Li S."/>
            <person name="Yan X."/>
            <person name="Hu W."/>
            <person name="He Q."/>
            <person name="Chen J."/>
            <person name="Tang J."/>
            <person name="Xie J."/>
            <person name="Liang S."/>
        </authorList>
    </citation>
    <scope>PROTEIN SEQUENCE OF 48-82</scope>
    <scope>IDENTIFICATION BY MASS SPECTROMETRY</scope>
    <scope>AMIDATION AT PHE-82</scope>
    <source>
        <tissue>Venom</tissue>
    </source>
</reference>
<feature type="signal peptide" evidence="2">
    <location>
        <begin position="1"/>
        <end position="21"/>
    </location>
</feature>
<feature type="propeptide" id="PRO_0000398488" evidence="3">
    <location>
        <begin position="22"/>
        <end position="47"/>
    </location>
</feature>
<feature type="peptide" id="PRO_0000398489" description="U21-theraphotoxin-Cg1b">
    <location>
        <begin position="48"/>
        <end position="82"/>
    </location>
</feature>
<feature type="modified residue" description="Phenylalanine amide" evidence="3">
    <location>
        <position position="82"/>
    </location>
</feature>
<feature type="disulfide bond" evidence="1">
    <location>
        <begin position="49"/>
        <end position="63"/>
    </location>
</feature>
<feature type="disulfide bond" evidence="1">
    <location>
        <begin position="56"/>
        <end position="68"/>
    </location>
</feature>
<feature type="disulfide bond" evidence="1">
    <location>
        <begin position="62"/>
        <end position="76"/>
    </location>
</feature>
<evidence type="ECO:0000250" key="1">
    <source>
        <dbReference type="UniProtKB" id="P0C247"/>
    </source>
</evidence>
<evidence type="ECO:0000255" key="2"/>
<evidence type="ECO:0000269" key="3">
    <source>
    </source>
</evidence>
<evidence type="ECO:0000305" key="4"/>
<name>JZT39_CHIGU</name>
<keyword id="KW-0027">Amidation</keyword>
<keyword id="KW-0903">Direct protein sequencing</keyword>
<keyword id="KW-1015">Disulfide bond</keyword>
<keyword id="KW-0872">Ion channel impairing toxin</keyword>
<keyword id="KW-0960">Knottin</keyword>
<keyword id="KW-0964">Secreted</keyword>
<keyword id="KW-0732">Signal</keyword>
<keyword id="KW-0800">Toxin</keyword>
<organism>
    <name type="scientific">Chilobrachys guangxiensis</name>
    <name type="common">Chinese earth tiger tarantula</name>
    <name type="synonym">Chilobrachys jingzhao</name>
    <dbReference type="NCBI Taxonomy" id="278060"/>
    <lineage>
        <taxon>Eukaryota</taxon>
        <taxon>Metazoa</taxon>
        <taxon>Ecdysozoa</taxon>
        <taxon>Arthropoda</taxon>
        <taxon>Chelicerata</taxon>
        <taxon>Arachnida</taxon>
        <taxon>Araneae</taxon>
        <taxon>Mygalomorphae</taxon>
        <taxon>Theraphosidae</taxon>
        <taxon>Chilobrachys</taxon>
    </lineage>
</organism>